<organism>
    <name type="scientific">Ajellomyces capsulatus</name>
    <name type="common">Darling's disease fungus</name>
    <name type="synonym">Histoplasma capsulatum</name>
    <dbReference type="NCBI Taxonomy" id="5037"/>
    <lineage>
        <taxon>Eukaryota</taxon>
        <taxon>Fungi</taxon>
        <taxon>Dikarya</taxon>
        <taxon>Ascomycota</taxon>
        <taxon>Pezizomycotina</taxon>
        <taxon>Eurotiomycetes</taxon>
        <taxon>Eurotiomycetidae</taxon>
        <taxon>Onygenales</taxon>
        <taxon>Ajellomycetaceae</taxon>
        <taxon>Histoplasma</taxon>
    </lineage>
</organism>
<accession>P33125</accession>
<proteinExistence type="inferred from homology"/>
<feature type="chain" id="PRO_0000062959" description="Heat shock protein 82">
    <location>
        <begin position="1"/>
        <end position="679"/>
    </location>
</feature>
<feature type="region of interest" description="Disordered" evidence="2">
    <location>
        <begin position="216"/>
        <end position="250"/>
    </location>
</feature>
<feature type="region of interest" description="Disordered" evidence="2">
    <location>
        <begin position="589"/>
        <end position="609"/>
    </location>
</feature>
<feature type="region of interest" description="Disordered" evidence="2">
    <location>
        <begin position="654"/>
        <end position="679"/>
    </location>
</feature>
<feature type="short sequence motif" description="TPR repeat-binding">
    <location>
        <begin position="675"/>
        <end position="679"/>
    </location>
</feature>
<feature type="compositionally biased region" description="Acidic residues" evidence="2">
    <location>
        <begin position="217"/>
        <end position="228"/>
    </location>
</feature>
<feature type="binding site" evidence="1">
    <location>
        <position position="37"/>
    </location>
    <ligand>
        <name>ATP</name>
        <dbReference type="ChEBI" id="CHEBI:30616"/>
    </ligand>
</feature>
<feature type="binding site" evidence="1">
    <location>
        <position position="79"/>
    </location>
    <ligand>
        <name>ATP</name>
        <dbReference type="ChEBI" id="CHEBI:30616"/>
    </ligand>
</feature>
<feature type="binding site" evidence="1">
    <location>
        <position position="124"/>
    </location>
    <ligand>
        <name>ATP</name>
        <dbReference type="ChEBI" id="CHEBI:30616"/>
    </ligand>
</feature>
<feature type="binding site" evidence="1">
    <location>
        <position position="373"/>
    </location>
    <ligand>
        <name>ATP</name>
        <dbReference type="ChEBI" id="CHEBI:30616"/>
    </ligand>
</feature>
<keyword id="KW-0067">ATP-binding</keyword>
<keyword id="KW-0143">Chaperone</keyword>
<keyword id="KW-0963">Cytoplasm</keyword>
<keyword id="KW-0547">Nucleotide-binding</keyword>
<keyword id="KW-0346">Stress response</keyword>
<gene>
    <name type="primary">HSP82</name>
</gene>
<protein>
    <recommendedName>
        <fullName>Heat shock protein 82</fullName>
    </recommendedName>
</protein>
<reference key="1">
    <citation type="journal article" date="1992" name="Biochim. Biophys. Acta">
        <title>Molecular cloning and expression of hsp82 gene of the dimorphic pathogenic fungus Histoplasma capsulatum.</title>
        <authorList>
            <person name="Minchiotti G."/>
            <person name="Gargano S."/>
            <person name="Maresca B."/>
        </authorList>
    </citation>
    <scope>NUCLEOTIDE SEQUENCE [GENOMIC DNA]</scope>
    <source>
        <strain>ATCC 26034 / G222B</strain>
    </source>
</reference>
<sequence>MSSETFEFQAEISQLLSLIINTVYSNKEIFLRELISNFSDALDKIRYKALSDPSKLESDKDLRIDITPDKENKTLTIRDTGIGMTKADLVNNLGTIARSGTKQFMEALTAGADISMIGQFGVGFYSAYLVADKVTVISKSNDDEQYIWESNAGGTFKVTQDDDGRAIGRGTKMILHLKDEQTEYLNESKIKEVVKKQSEFIFYPIYLHVLKENEKEVPDEDAEEVKDEGDDKAPKVEEVDEDEEDKTKAKKTKKIKENKIEEEELNKTKPIWTRNPADITQEEYASFYKTNDWEDHLAVKHFSVEGQLEFRAILFVPKRAPFDLFETKKTKNNIKLYVRRVFITDDATDLIPEWLSFIKGVVDSEDLPLGLSRETLQQNKIMKVIKNIVKKTLELFNEIAEDREQFDKFYSAFSKNIKLGVHEDAQNRPALAKLLRYNSTKSGDETTSLTDYVTRMPEHHKTIYYITGESLKAVQKSPFLDTLKEKNFEVLFLVDPNDEYAMTQLKEFDGKKLVDITKDFELEETEEEKKDREAEEKEYEGLAKSLENILGDKVEKVVVSHKLIGSPCAIRTGQFGWSANMERIMKAQALRDTSMSSRRSSRPTEGNDRTVKSITQLLFETSLLVSGFTIEEPSGFAGRIHKLVSLGLNIDEDAETSEEKEADTVVAEAPADSDMEEVD</sequence>
<evidence type="ECO:0000250" key="1"/>
<evidence type="ECO:0000256" key="2">
    <source>
        <dbReference type="SAM" id="MobiDB-lite"/>
    </source>
</evidence>
<evidence type="ECO:0000305" key="3"/>
<comment type="function">
    <text evidence="1">Molecular chaperone that promotes the maturation, structural maintenance and proper regulation of specific target proteins involved for instance in cell cycle control and signal transduction. Undergoes a functional cycle that is linked to its ATPase activity. This cycle probably induces conformational changes in the client proteins, thereby causing their activation. Interacts dynamically with various co-chaperones that modulate its substrate recognition, ATPase cycle and chaperone function (By similarity).</text>
</comment>
<comment type="subunit">
    <text evidence="1">Homodimer.</text>
</comment>
<comment type="subcellular location">
    <subcellularLocation>
        <location evidence="1">Cytoplasm</location>
    </subcellularLocation>
</comment>
<comment type="domain">
    <text evidence="1">The TPR repeat-binding motif mediates interaction with TPR repeat-containing proteins.</text>
</comment>
<comment type="similarity">
    <text evidence="3">Belongs to the heat shock protein 90 family.</text>
</comment>
<comment type="sequence caution" evidence="3">
    <conflict type="frameshift">
        <sequence resource="EMBL-CDS" id="AAA33383"/>
    </conflict>
</comment>
<name>HSP82_AJECA</name>
<dbReference type="EMBL" id="M55629">
    <property type="protein sequence ID" value="AAA33383.1"/>
    <property type="status" value="ALT_FRAME"/>
    <property type="molecule type" value="Genomic_DNA"/>
</dbReference>
<dbReference type="PIR" id="S21764">
    <property type="entry name" value="S21764"/>
</dbReference>
<dbReference type="SMR" id="P33125"/>
<dbReference type="GO" id="GO:0005737">
    <property type="term" value="C:cytoplasm"/>
    <property type="evidence" value="ECO:0007669"/>
    <property type="project" value="UniProtKB-SubCell"/>
</dbReference>
<dbReference type="GO" id="GO:0005524">
    <property type="term" value="F:ATP binding"/>
    <property type="evidence" value="ECO:0007669"/>
    <property type="project" value="UniProtKB-KW"/>
</dbReference>
<dbReference type="GO" id="GO:0016887">
    <property type="term" value="F:ATP hydrolysis activity"/>
    <property type="evidence" value="ECO:0007669"/>
    <property type="project" value="InterPro"/>
</dbReference>
<dbReference type="GO" id="GO:0140662">
    <property type="term" value="F:ATP-dependent protein folding chaperone"/>
    <property type="evidence" value="ECO:0007669"/>
    <property type="project" value="InterPro"/>
</dbReference>
<dbReference type="GO" id="GO:0051082">
    <property type="term" value="F:unfolded protein binding"/>
    <property type="evidence" value="ECO:0007669"/>
    <property type="project" value="InterPro"/>
</dbReference>
<dbReference type="CDD" id="cd16927">
    <property type="entry name" value="HATPase_Hsp90-like"/>
    <property type="match status" value="1"/>
</dbReference>
<dbReference type="FunFam" id="3.30.230.80:FF:000001">
    <property type="entry name" value="Heat shock protein 90 alpha"/>
    <property type="match status" value="1"/>
</dbReference>
<dbReference type="FunFam" id="3.40.50.11260:FF:000001">
    <property type="entry name" value="Heat shock protein 90 alpha"/>
    <property type="match status" value="1"/>
</dbReference>
<dbReference type="FunFam" id="3.30.565.10:FF:000001">
    <property type="entry name" value="Heat shock protein HSP 90-alpha"/>
    <property type="match status" value="1"/>
</dbReference>
<dbReference type="Gene3D" id="3.30.230.80">
    <property type="match status" value="1"/>
</dbReference>
<dbReference type="Gene3D" id="3.40.50.11260">
    <property type="match status" value="1"/>
</dbReference>
<dbReference type="Gene3D" id="1.20.120.790">
    <property type="entry name" value="Heat shock protein 90, C-terminal domain"/>
    <property type="match status" value="2"/>
</dbReference>
<dbReference type="Gene3D" id="3.30.565.10">
    <property type="entry name" value="Histidine kinase-like ATPase, C-terminal domain"/>
    <property type="match status" value="1"/>
</dbReference>
<dbReference type="HAMAP" id="MF_00505">
    <property type="entry name" value="HSP90"/>
    <property type="match status" value="1"/>
</dbReference>
<dbReference type="InterPro" id="IPR036890">
    <property type="entry name" value="HATPase_C_sf"/>
</dbReference>
<dbReference type="InterPro" id="IPR019805">
    <property type="entry name" value="Heat_shock_protein_90_CS"/>
</dbReference>
<dbReference type="InterPro" id="IPR037196">
    <property type="entry name" value="HSP90_C"/>
</dbReference>
<dbReference type="InterPro" id="IPR001404">
    <property type="entry name" value="Hsp90_fam"/>
</dbReference>
<dbReference type="InterPro" id="IPR020575">
    <property type="entry name" value="Hsp90_N"/>
</dbReference>
<dbReference type="InterPro" id="IPR020568">
    <property type="entry name" value="Ribosomal_Su5_D2-typ_SF"/>
</dbReference>
<dbReference type="NCBIfam" id="NF003555">
    <property type="entry name" value="PRK05218.1"/>
    <property type="match status" value="1"/>
</dbReference>
<dbReference type="PANTHER" id="PTHR11528">
    <property type="entry name" value="HEAT SHOCK PROTEIN 90 FAMILY MEMBER"/>
    <property type="match status" value="1"/>
</dbReference>
<dbReference type="Pfam" id="PF02518">
    <property type="entry name" value="HATPase_c"/>
    <property type="match status" value="1"/>
</dbReference>
<dbReference type="Pfam" id="PF00183">
    <property type="entry name" value="HSP90"/>
    <property type="match status" value="1"/>
</dbReference>
<dbReference type="PIRSF" id="PIRSF002583">
    <property type="entry name" value="Hsp90"/>
    <property type="match status" value="1"/>
</dbReference>
<dbReference type="PRINTS" id="PR00775">
    <property type="entry name" value="HEATSHOCK90"/>
</dbReference>
<dbReference type="SMART" id="SM00387">
    <property type="entry name" value="HATPase_c"/>
    <property type="match status" value="1"/>
</dbReference>
<dbReference type="SUPFAM" id="SSF55874">
    <property type="entry name" value="ATPase domain of HSP90 chaperone/DNA topoisomerase II/histidine kinase"/>
    <property type="match status" value="1"/>
</dbReference>
<dbReference type="SUPFAM" id="SSF110942">
    <property type="entry name" value="HSP90 C-terminal domain"/>
    <property type="match status" value="1"/>
</dbReference>
<dbReference type="SUPFAM" id="SSF54211">
    <property type="entry name" value="Ribosomal protein S5 domain 2-like"/>
    <property type="match status" value="1"/>
</dbReference>
<dbReference type="PROSITE" id="PS00298">
    <property type="entry name" value="HSP90"/>
    <property type="match status" value="1"/>
</dbReference>